<organism>
    <name type="scientific">Arabidopsis thaliana</name>
    <name type="common">Mouse-ear cress</name>
    <dbReference type="NCBI Taxonomy" id="3702"/>
    <lineage>
        <taxon>Eukaryota</taxon>
        <taxon>Viridiplantae</taxon>
        <taxon>Streptophyta</taxon>
        <taxon>Embryophyta</taxon>
        <taxon>Tracheophyta</taxon>
        <taxon>Spermatophyta</taxon>
        <taxon>Magnoliopsida</taxon>
        <taxon>eudicotyledons</taxon>
        <taxon>Gunneridae</taxon>
        <taxon>Pentapetalae</taxon>
        <taxon>rosids</taxon>
        <taxon>malvids</taxon>
        <taxon>Brassicales</taxon>
        <taxon>Brassicaceae</taxon>
        <taxon>Camelineae</taxon>
        <taxon>Arabidopsis</taxon>
    </lineage>
</organism>
<protein>
    <recommendedName>
        <fullName>Probable protein phosphatase 2C 65</fullName>
        <shortName>AtPP2C65</shortName>
        <ecNumber>3.1.3.16</ecNumber>
    </recommendedName>
</protein>
<accession>Q6NKS1</accession>
<accession>Q2V3A9</accession>
<accession>Q9M006</accession>
<feature type="chain" id="PRO_0000367987" description="Probable protein phosphatase 2C 65">
    <location>
        <begin position="1"/>
        <end position="382"/>
    </location>
</feature>
<feature type="domain" description="PPM-type phosphatase" evidence="2">
    <location>
        <begin position="47"/>
        <end position="337"/>
    </location>
</feature>
<feature type="region of interest" description="Disordered" evidence="3">
    <location>
        <begin position="107"/>
        <end position="126"/>
    </location>
</feature>
<feature type="binding site" evidence="1">
    <location>
        <position position="83"/>
    </location>
    <ligand>
        <name>Mn(2+)</name>
        <dbReference type="ChEBI" id="CHEBI:29035"/>
        <label>1</label>
    </ligand>
</feature>
<feature type="binding site" evidence="1">
    <location>
        <position position="83"/>
    </location>
    <ligand>
        <name>Mn(2+)</name>
        <dbReference type="ChEBI" id="CHEBI:29035"/>
        <label>2</label>
    </ligand>
</feature>
<feature type="binding site" evidence="1">
    <location>
        <position position="84"/>
    </location>
    <ligand>
        <name>Mn(2+)</name>
        <dbReference type="ChEBI" id="CHEBI:29035"/>
        <label>1</label>
    </ligand>
</feature>
<feature type="binding site" evidence="1">
    <location>
        <position position="282"/>
    </location>
    <ligand>
        <name>Mn(2+)</name>
        <dbReference type="ChEBI" id="CHEBI:29035"/>
        <label>2</label>
    </ligand>
</feature>
<feature type="binding site" evidence="1">
    <location>
        <position position="328"/>
    </location>
    <ligand>
        <name>Mn(2+)</name>
        <dbReference type="ChEBI" id="CHEBI:29035"/>
        <label>2</label>
    </ligand>
</feature>
<feature type="splice variant" id="VSP_036776" description="In isoform 2." evidence="4">
    <location>
        <begin position="1"/>
        <end position="49"/>
    </location>
</feature>
<evidence type="ECO:0000250" key="1"/>
<evidence type="ECO:0000255" key="2">
    <source>
        <dbReference type="PROSITE-ProRule" id="PRU01082"/>
    </source>
</evidence>
<evidence type="ECO:0000256" key="3">
    <source>
        <dbReference type="SAM" id="MobiDB-lite"/>
    </source>
</evidence>
<evidence type="ECO:0000303" key="4">
    <source>
    </source>
</evidence>
<evidence type="ECO:0000305" key="5"/>
<comment type="catalytic activity">
    <reaction>
        <text>O-phospho-L-seryl-[protein] + H2O = L-seryl-[protein] + phosphate</text>
        <dbReference type="Rhea" id="RHEA:20629"/>
        <dbReference type="Rhea" id="RHEA-COMP:9863"/>
        <dbReference type="Rhea" id="RHEA-COMP:11604"/>
        <dbReference type="ChEBI" id="CHEBI:15377"/>
        <dbReference type="ChEBI" id="CHEBI:29999"/>
        <dbReference type="ChEBI" id="CHEBI:43474"/>
        <dbReference type="ChEBI" id="CHEBI:83421"/>
        <dbReference type="EC" id="3.1.3.16"/>
    </reaction>
</comment>
<comment type="catalytic activity">
    <reaction>
        <text>O-phospho-L-threonyl-[protein] + H2O = L-threonyl-[protein] + phosphate</text>
        <dbReference type="Rhea" id="RHEA:47004"/>
        <dbReference type="Rhea" id="RHEA-COMP:11060"/>
        <dbReference type="Rhea" id="RHEA-COMP:11605"/>
        <dbReference type="ChEBI" id="CHEBI:15377"/>
        <dbReference type="ChEBI" id="CHEBI:30013"/>
        <dbReference type="ChEBI" id="CHEBI:43474"/>
        <dbReference type="ChEBI" id="CHEBI:61977"/>
        <dbReference type="EC" id="3.1.3.16"/>
    </reaction>
</comment>
<comment type="cofactor">
    <cofactor evidence="1">
        <name>Mg(2+)</name>
        <dbReference type="ChEBI" id="CHEBI:18420"/>
    </cofactor>
    <cofactor evidence="1">
        <name>Mn(2+)</name>
        <dbReference type="ChEBI" id="CHEBI:29035"/>
    </cofactor>
    <text evidence="1">Binds 2 magnesium or manganese ions per subunit.</text>
</comment>
<comment type="alternative products">
    <event type="alternative splicing"/>
    <isoform>
        <id>Q6NKS1-1</id>
        <name>1</name>
        <sequence type="displayed"/>
    </isoform>
    <isoform>
        <id>Q6NKS1-2</id>
        <name>2</name>
        <sequence type="described" ref="VSP_036776"/>
    </isoform>
</comment>
<comment type="similarity">
    <text evidence="5">Belongs to the PP2C family.</text>
</comment>
<comment type="sequence caution" evidence="5">
    <conflict type="miscellaneous discrepancy">
        <sequence resource="EMBL" id="BX831823"/>
    </conflict>
    <text>Sequencing errors.</text>
</comment>
<comment type="sequence caution" evidence="5">
    <conflict type="erroneous gene model prediction">
        <sequence resource="EMBL-CDS" id="CAB82286"/>
    </conflict>
</comment>
<keyword id="KW-0025">Alternative splicing</keyword>
<keyword id="KW-0378">Hydrolase</keyword>
<keyword id="KW-0460">Magnesium</keyword>
<keyword id="KW-0464">Manganese</keyword>
<keyword id="KW-0479">Metal-binding</keyword>
<keyword id="KW-0904">Protein phosphatase</keyword>
<keyword id="KW-1185">Reference proteome</keyword>
<reference key="1">
    <citation type="journal article" date="2000" name="Nature">
        <title>Sequence and analysis of chromosome 5 of the plant Arabidopsis thaliana.</title>
        <authorList>
            <person name="Tabata S."/>
            <person name="Kaneko T."/>
            <person name="Nakamura Y."/>
            <person name="Kotani H."/>
            <person name="Kato T."/>
            <person name="Asamizu E."/>
            <person name="Miyajima N."/>
            <person name="Sasamoto S."/>
            <person name="Kimura T."/>
            <person name="Hosouchi T."/>
            <person name="Kawashima K."/>
            <person name="Kohara M."/>
            <person name="Matsumoto M."/>
            <person name="Matsuno A."/>
            <person name="Muraki A."/>
            <person name="Nakayama S."/>
            <person name="Nakazaki N."/>
            <person name="Naruo K."/>
            <person name="Okumura S."/>
            <person name="Shinpo S."/>
            <person name="Takeuchi C."/>
            <person name="Wada T."/>
            <person name="Watanabe A."/>
            <person name="Yamada M."/>
            <person name="Yasuda M."/>
            <person name="Sato S."/>
            <person name="de la Bastide M."/>
            <person name="Huang E."/>
            <person name="Spiegel L."/>
            <person name="Gnoj L."/>
            <person name="O'Shaughnessy A."/>
            <person name="Preston R."/>
            <person name="Habermann K."/>
            <person name="Murray J."/>
            <person name="Johnson D."/>
            <person name="Rohlfing T."/>
            <person name="Nelson J."/>
            <person name="Stoneking T."/>
            <person name="Pepin K."/>
            <person name="Spieth J."/>
            <person name="Sekhon M."/>
            <person name="Armstrong J."/>
            <person name="Becker M."/>
            <person name="Belter E."/>
            <person name="Cordum H."/>
            <person name="Cordes M."/>
            <person name="Courtney L."/>
            <person name="Courtney W."/>
            <person name="Dante M."/>
            <person name="Du H."/>
            <person name="Edwards J."/>
            <person name="Fryman J."/>
            <person name="Haakensen B."/>
            <person name="Lamar E."/>
            <person name="Latreille P."/>
            <person name="Leonard S."/>
            <person name="Meyer R."/>
            <person name="Mulvaney E."/>
            <person name="Ozersky P."/>
            <person name="Riley A."/>
            <person name="Strowmatt C."/>
            <person name="Wagner-McPherson C."/>
            <person name="Wollam A."/>
            <person name="Yoakum M."/>
            <person name="Bell M."/>
            <person name="Dedhia N."/>
            <person name="Parnell L."/>
            <person name="Shah R."/>
            <person name="Rodriguez M."/>
            <person name="Hoon See L."/>
            <person name="Vil D."/>
            <person name="Baker J."/>
            <person name="Kirchoff K."/>
            <person name="Toth K."/>
            <person name="King L."/>
            <person name="Bahret A."/>
            <person name="Miller B."/>
            <person name="Marra M.A."/>
            <person name="Martienssen R."/>
            <person name="McCombie W.R."/>
            <person name="Wilson R.K."/>
            <person name="Murphy G."/>
            <person name="Bancroft I."/>
            <person name="Volckaert G."/>
            <person name="Wambutt R."/>
            <person name="Duesterhoeft A."/>
            <person name="Stiekema W."/>
            <person name="Pohl T."/>
            <person name="Entian K.-D."/>
            <person name="Terryn N."/>
            <person name="Hartley N."/>
            <person name="Bent E."/>
            <person name="Johnson S."/>
            <person name="Langham S.-A."/>
            <person name="McCullagh B."/>
            <person name="Robben J."/>
            <person name="Grymonprez B."/>
            <person name="Zimmermann W."/>
            <person name="Ramsperger U."/>
            <person name="Wedler H."/>
            <person name="Balke K."/>
            <person name="Wedler E."/>
            <person name="Peters S."/>
            <person name="van Staveren M."/>
            <person name="Dirkse W."/>
            <person name="Mooijman P."/>
            <person name="Klein Lankhorst R."/>
            <person name="Weitzenegger T."/>
            <person name="Bothe G."/>
            <person name="Rose M."/>
            <person name="Hauf J."/>
            <person name="Berneiser S."/>
            <person name="Hempel S."/>
            <person name="Feldpausch M."/>
            <person name="Lamberth S."/>
            <person name="Villarroel R."/>
            <person name="Gielen J."/>
            <person name="Ardiles W."/>
            <person name="Bents O."/>
            <person name="Lemcke K."/>
            <person name="Kolesov G."/>
            <person name="Mayer K.F.X."/>
            <person name="Rudd S."/>
            <person name="Schoof H."/>
            <person name="Schueller C."/>
            <person name="Zaccaria P."/>
            <person name="Mewes H.-W."/>
            <person name="Bevan M."/>
            <person name="Fransz P.F."/>
        </authorList>
    </citation>
    <scope>NUCLEOTIDE SEQUENCE [LARGE SCALE GENOMIC DNA]</scope>
    <source>
        <strain>cv. Columbia</strain>
    </source>
</reference>
<reference key="2">
    <citation type="journal article" date="2017" name="Plant J.">
        <title>Araport11: a complete reannotation of the Arabidopsis thaliana reference genome.</title>
        <authorList>
            <person name="Cheng C.Y."/>
            <person name="Krishnakumar V."/>
            <person name="Chan A.P."/>
            <person name="Thibaud-Nissen F."/>
            <person name="Schobel S."/>
            <person name="Town C.D."/>
        </authorList>
    </citation>
    <scope>GENOME REANNOTATION</scope>
    <source>
        <strain>cv. Columbia</strain>
    </source>
</reference>
<reference key="3">
    <citation type="journal article" date="2004" name="Genome Res.">
        <title>Whole genome sequence comparisons and 'full-length' cDNA sequences: a combined approach to evaluate and improve Arabidopsis genome annotation.</title>
        <authorList>
            <person name="Castelli V."/>
            <person name="Aury J.-M."/>
            <person name="Jaillon O."/>
            <person name="Wincker P."/>
            <person name="Clepet C."/>
            <person name="Menard M."/>
            <person name="Cruaud C."/>
            <person name="Quetier F."/>
            <person name="Scarpelli C."/>
            <person name="Schaechter V."/>
            <person name="Temple G."/>
            <person name="Caboche M."/>
            <person name="Weissenbach J."/>
            <person name="Salanoubat M."/>
        </authorList>
    </citation>
    <scope>NUCLEOTIDE SEQUENCE [LARGE SCALE MRNA] (ISOFORM 2)</scope>
    <source>
        <strain>cv. Columbia</strain>
    </source>
</reference>
<reference key="4">
    <citation type="submission" date="2004-05" db="EMBL/GenBank/DDBJ databases">
        <title>Arabidopsis ORF clones.</title>
        <authorList>
            <person name="Cheuk R.F."/>
            <person name="Chen H."/>
            <person name="Kim C.J."/>
            <person name="Shinn P."/>
            <person name="Ecker J.R."/>
        </authorList>
    </citation>
    <scope>NUCLEOTIDE SEQUENCE [LARGE SCALE MRNA] (ISOFORM 1)</scope>
    <source>
        <strain>cv. Columbia</strain>
    </source>
</reference>
<reference key="5">
    <citation type="journal article" date="2008" name="BMC Genomics">
        <title>Genome-wide and expression analysis of protein phosphatase 2C in rice and Arabidopsis.</title>
        <authorList>
            <person name="Xue T."/>
            <person name="Wang D."/>
            <person name="Zhang S."/>
            <person name="Ehlting J."/>
            <person name="Ni F."/>
            <person name="Jacab S."/>
            <person name="Zheng C."/>
            <person name="Zhong Y."/>
        </authorList>
    </citation>
    <scope>GENE FAMILY</scope>
    <scope>NOMENCLATURE</scope>
</reference>
<gene>
    <name type="ordered locus">At5g01700</name>
    <name type="ORF">F7A7.220</name>
</gene>
<sequence length="382" mass="42004">MGVCCSKGTGIIVEHGADDGNECGDGEAEVRDTNDGAVVRTRGSSKHVSMSIKQGKKGINQDAMTVWENFGGEEDTIFCGVFDGHGPMGHKISRHVCENLPSRVHSKIRSSKSAGDENIENNSSQSQEELFREFEDILVTFFKQIDSELGLDSPYDSFCSGTTAVTVFKQADCLVIANLGHSRAVLGTRSKNSFKAVQLTVDLKPCVQREAERIVSCKGRVFAMEEEPDVYRVWMPDDDCPGLAMSRAFGDFCLKDYGLVCIPDVFCRKVSREDEFVVLATDGIWDVLSNEEVVKVVGSCKDRSVAAEMLVQRAARTWRTKFPASKADDCAVVVLYLNHRPYPREGNVSRAISTISWRSNKSNNECYGAAPLSPLGLSQRVS</sequence>
<dbReference type="EC" id="3.1.3.16"/>
<dbReference type="EMBL" id="AL161946">
    <property type="protein sequence ID" value="CAB82286.1"/>
    <property type="status" value="ALT_SEQ"/>
    <property type="molecule type" value="Genomic_DNA"/>
</dbReference>
<dbReference type="EMBL" id="CP002688">
    <property type="protein sequence ID" value="AED90378.1"/>
    <property type="molecule type" value="Genomic_DNA"/>
</dbReference>
<dbReference type="EMBL" id="CP002688">
    <property type="protein sequence ID" value="AED90379.1"/>
    <property type="molecule type" value="Genomic_DNA"/>
</dbReference>
<dbReference type="EMBL" id="BX831823">
    <property type="status" value="NOT_ANNOTATED_CDS"/>
    <property type="molecule type" value="mRNA"/>
</dbReference>
<dbReference type="EMBL" id="BT011618">
    <property type="protein sequence ID" value="AAS47624.1"/>
    <property type="molecule type" value="mRNA"/>
</dbReference>
<dbReference type="EMBL" id="BT012622">
    <property type="protein sequence ID" value="AAT06441.1"/>
    <property type="molecule type" value="mRNA"/>
</dbReference>
<dbReference type="PIR" id="T48191">
    <property type="entry name" value="T48191"/>
</dbReference>
<dbReference type="RefSeq" id="NP_001031819.1">
    <molecule id="Q6NKS1-1"/>
    <property type="nucleotide sequence ID" value="NM_001036742.2"/>
</dbReference>
<dbReference type="RefSeq" id="NP_195790.4">
    <molecule id="Q6NKS1-2"/>
    <property type="nucleotide sequence ID" value="NM_120248.5"/>
</dbReference>
<dbReference type="SMR" id="Q6NKS1"/>
<dbReference type="FunCoup" id="Q6NKS1">
    <property type="interactions" value="336"/>
</dbReference>
<dbReference type="PaxDb" id="3702-AT5G01700.2"/>
<dbReference type="ProteomicsDB" id="250972">
    <molecule id="Q6NKS1-1"/>
</dbReference>
<dbReference type="EnsemblPlants" id="AT5G01700.1">
    <molecule id="Q6NKS1-2"/>
    <property type="protein sequence ID" value="AT5G01700.1"/>
    <property type="gene ID" value="AT5G01700"/>
</dbReference>
<dbReference type="EnsemblPlants" id="AT5G01700.2">
    <molecule id="Q6NKS1-1"/>
    <property type="protein sequence ID" value="AT5G01700.2"/>
    <property type="gene ID" value="AT5G01700"/>
</dbReference>
<dbReference type="GeneID" id="831695"/>
<dbReference type="Gramene" id="AT5G01700.1">
    <molecule id="Q6NKS1-2"/>
    <property type="protein sequence ID" value="AT5G01700.1"/>
    <property type="gene ID" value="AT5G01700"/>
</dbReference>
<dbReference type="Gramene" id="AT5G01700.2">
    <molecule id="Q6NKS1-1"/>
    <property type="protein sequence ID" value="AT5G01700.2"/>
    <property type="gene ID" value="AT5G01700"/>
</dbReference>
<dbReference type="KEGG" id="ath:AT5G01700"/>
<dbReference type="Araport" id="AT5G01700"/>
<dbReference type="TAIR" id="AT5G01700"/>
<dbReference type="eggNOG" id="KOG0698">
    <property type="taxonomic scope" value="Eukaryota"/>
</dbReference>
<dbReference type="InParanoid" id="Q6NKS1"/>
<dbReference type="PhylomeDB" id="Q6NKS1"/>
<dbReference type="PRO" id="PR:Q6NKS1"/>
<dbReference type="Proteomes" id="UP000006548">
    <property type="component" value="Chromosome 5"/>
</dbReference>
<dbReference type="ExpressionAtlas" id="Q6NKS1">
    <property type="expression patterns" value="baseline and differential"/>
</dbReference>
<dbReference type="GO" id="GO:0046872">
    <property type="term" value="F:metal ion binding"/>
    <property type="evidence" value="ECO:0007669"/>
    <property type="project" value="UniProtKB-KW"/>
</dbReference>
<dbReference type="GO" id="GO:0004722">
    <property type="term" value="F:protein serine/threonine phosphatase activity"/>
    <property type="evidence" value="ECO:0007669"/>
    <property type="project" value="UniProtKB-EC"/>
</dbReference>
<dbReference type="CDD" id="cd00143">
    <property type="entry name" value="PP2Cc"/>
    <property type="match status" value="1"/>
</dbReference>
<dbReference type="FunFam" id="3.60.40.10:FF:000063">
    <property type="entry name" value="Probable protein phosphatase 2C 12"/>
    <property type="match status" value="1"/>
</dbReference>
<dbReference type="Gene3D" id="3.60.40.10">
    <property type="entry name" value="PPM-type phosphatase domain"/>
    <property type="match status" value="1"/>
</dbReference>
<dbReference type="InterPro" id="IPR015655">
    <property type="entry name" value="PP2C"/>
</dbReference>
<dbReference type="InterPro" id="IPR036457">
    <property type="entry name" value="PPM-type-like_dom_sf"/>
</dbReference>
<dbReference type="InterPro" id="IPR001932">
    <property type="entry name" value="PPM-type_phosphatase-like_dom"/>
</dbReference>
<dbReference type="PANTHER" id="PTHR47992">
    <property type="entry name" value="PROTEIN PHOSPHATASE"/>
    <property type="match status" value="1"/>
</dbReference>
<dbReference type="Pfam" id="PF00481">
    <property type="entry name" value="PP2C"/>
    <property type="match status" value="1"/>
</dbReference>
<dbReference type="SMART" id="SM00332">
    <property type="entry name" value="PP2Cc"/>
    <property type="match status" value="1"/>
</dbReference>
<dbReference type="SUPFAM" id="SSF81606">
    <property type="entry name" value="PP2C-like"/>
    <property type="match status" value="1"/>
</dbReference>
<dbReference type="PROSITE" id="PS51746">
    <property type="entry name" value="PPM_2"/>
    <property type="match status" value="1"/>
</dbReference>
<name>P2C65_ARATH</name>
<proteinExistence type="evidence at transcript level"/>